<feature type="chain" id="PRO_1000068585" description="Malate dehydrogenase">
    <location>
        <begin position="1"/>
        <end position="312"/>
    </location>
</feature>
<feature type="active site" description="Proton acceptor" evidence="1">
    <location>
        <position position="177"/>
    </location>
</feature>
<feature type="binding site" evidence="1">
    <location>
        <begin position="7"/>
        <end position="13"/>
    </location>
    <ligand>
        <name>NAD(+)</name>
        <dbReference type="ChEBI" id="CHEBI:57540"/>
    </ligand>
</feature>
<feature type="binding site" evidence="1">
    <location>
        <position position="34"/>
    </location>
    <ligand>
        <name>NAD(+)</name>
        <dbReference type="ChEBI" id="CHEBI:57540"/>
    </ligand>
</feature>
<feature type="binding site" evidence="1">
    <location>
        <position position="81"/>
    </location>
    <ligand>
        <name>substrate</name>
    </ligand>
</feature>
<feature type="binding site" evidence="1">
    <location>
        <position position="87"/>
    </location>
    <ligand>
        <name>substrate</name>
    </ligand>
</feature>
<feature type="binding site" evidence="1">
    <location>
        <position position="94"/>
    </location>
    <ligand>
        <name>NAD(+)</name>
        <dbReference type="ChEBI" id="CHEBI:57540"/>
    </ligand>
</feature>
<feature type="binding site" evidence="1">
    <location>
        <begin position="117"/>
        <end position="119"/>
    </location>
    <ligand>
        <name>NAD(+)</name>
        <dbReference type="ChEBI" id="CHEBI:57540"/>
    </ligand>
</feature>
<feature type="binding site" evidence="1">
    <location>
        <position position="119"/>
    </location>
    <ligand>
        <name>substrate</name>
    </ligand>
</feature>
<feature type="binding site" evidence="1">
    <location>
        <position position="153"/>
    </location>
    <ligand>
        <name>substrate</name>
    </ligand>
</feature>
<feature type="binding site" evidence="1">
    <location>
        <position position="227"/>
    </location>
    <ligand>
        <name>NAD(+)</name>
        <dbReference type="ChEBI" id="CHEBI:57540"/>
    </ligand>
</feature>
<reference key="1">
    <citation type="journal article" date="2008" name="J. Bacteriol.">
        <title>The pangenome structure of Escherichia coli: comparative genomic analysis of E. coli commensal and pathogenic isolates.</title>
        <authorList>
            <person name="Rasko D.A."/>
            <person name="Rosovitz M.J."/>
            <person name="Myers G.S.A."/>
            <person name="Mongodin E.F."/>
            <person name="Fricke W.F."/>
            <person name="Gajer P."/>
            <person name="Crabtree J."/>
            <person name="Sebaihia M."/>
            <person name="Thomson N.R."/>
            <person name="Chaudhuri R."/>
            <person name="Henderson I.R."/>
            <person name="Sperandio V."/>
            <person name="Ravel J."/>
        </authorList>
    </citation>
    <scope>NUCLEOTIDE SEQUENCE [LARGE SCALE GENOMIC DNA]</scope>
    <source>
        <strain>E24377A / ETEC</strain>
    </source>
</reference>
<keyword id="KW-0520">NAD</keyword>
<keyword id="KW-0560">Oxidoreductase</keyword>
<keyword id="KW-1185">Reference proteome</keyword>
<keyword id="KW-0816">Tricarboxylic acid cycle</keyword>
<protein>
    <recommendedName>
        <fullName evidence="1">Malate dehydrogenase</fullName>
        <ecNumber evidence="1">1.1.1.37</ecNumber>
    </recommendedName>
</protein>
<organism>
    <name type="scientific">Escherichia coli O139:H28 (strain E24377A / ETEC)</name>
    <dbReference type="NCBI Taxonomy" id="331111"/>
    <lineage>
        <taxon>Bacteria</taxon>
        <taxon>Pseudomonadati</taxon>
        <taxon>Pseudomonadota</taxon>
        <taxon>Gammaproteobacteria</taxon>
        <taxon>Enterobacterales</taxon>
        <taxon>Enterobacteriaceae</taxon>
        <taxon>Escherichia</taxon>
    </lineage>
</organism>
<accession>A7ZSD0</accession>
<name>MDH_ECO24</name>
<dbReference type="EC" id="1.1.1.37" evidence="1"/>
<dbReference type="EMBL" id="CP000800">
    <property type="protein sequence ID" value="ABV17436.1"/>
    <property type="molecule type" value="Genomic_DNA"/>
</dbReference>
<dbReference type="RefSeq" id="WP_001295272.1">
    <property type="nucleotide sequence ID" value="NC_009801.1"/>
</dbReference>
<dbReference type="SMR" id="A7ZSD0"/>
<dbReference type="GeneID" id="93778749"/>
<dbReference type="KEGG" id="ecw:EcE24377A_3719"/>
<dbReference type="HOGENOM" id="CLU_047181_0_1_6"/>
<dbReference type="Proteomes" id="UP000001122">
    <property type="component" value="Chromosome"/>
</dbReference>
<dbReference type="GO" id="GO:0005737">
    <property type="term" value="C:cytoplasm"/>
    <property type="evidence" value="ECO:0007669"/>
    <property type="project" value="TreeGrafter"/>
</dbReference>
<dbReference type="GO" id="GO:0030060">
    <property type="term" value="F:L-malate dehydrogenase (NAD+) activity"/>
    <property type="evidence" value="ECO:0007669"/>
    <property type="project" value="UniProtKB-UniRule"/>
</dbReference>
<dbReference type="GO" id="GO:0006108">
    <property type="term" value="P:malate metabolic process"/>
    <property type="evidence" value="ECO:0007669"/>
    <property type="project" value="InterPro"/>
</dbReference>
<dbReference type="GO" id="GO:0006099">
    <property type="term" value="P:tricarboxylic acid cycle"/>
    <property type="evidence" value="ECO:0007669"/>
    <property type="project" value="UniProtKB-UniRule"/>
</dbReference>
<dbReference type="CDD" id="cd01337">
    <property type="entry name" value="MDH_glyoxysomal_mitochondrial"/>
    <property type="match status" value="1"/>
</dbReference>
<dbReference type="FunFam" id="3.40.50.720:FF:000017">
    <property type="entry name" value="Malate dehydrogenase"/>
    <property type="match status" value="1"/>
</dbReference>
<dbReference type="FunFam" id="3.90.110.10:FF:000001">
    <property type="entry name" value="Malate dehydrogenase"/>
    <property type="match status" value="1"/>
</dbReference>
<dbReference type="Gene3D" id="3.90.110.10">
    <property type="entry name" value="Lactate dehydrogenase/glycoside hydrolase, family 4, C-terminal"/>
    <property type="match status" value="1"/>
</dbReference>
<dbReference type="Gene3D" id="3.40.50.720">
    <property type="entry name" value="NAD(P)-binding Rossmann-like Domain"/>
    <property type="match status" value="1"/>
</dbReference>
<dbReference type="HAMAP" id="MF_01516">
    <property type="entry name" value="Malate_dehydrog_1"/>
    <property type="match status" value="1"/>
</dbReference>
<dbReference type="InterPro" id="IPR001557">
    <property type="entry name" value="L-lactate/malate_DH"/>
</dbReference>
<dbReference type="InterPro" id="IPR022383">
    <property type="entry name" value="Lactate/malate_DH_C"/>
</dbReference>
<dbReference type="InterPro" id="IPR001236">
    <property type="entry name" value="Lactate/malate_DH_N"/>
</dbReference>
<dbReference type="InterPro" id="IPR015955">
    <property type="entry name" value="Lactate_DH/Glyco_Ohase_4_C"/>
</dbReference>
<dbReference type="InterPro" id="IPR001252">
    <property type="entry name" value="Malate_DH_AS"/>
</dbReference>
<dbReference type="InterPro" id="IPR010097">
    <property type="entry name" value="Malate_DH_type1"/>
</dbReference>
<dbReference type="InterPro" id="IPR023958">
    <property type="entry name" value="Malate_DH_type1_bac"/>
</dbReference>
<dbReference type="InterPro" id="IPR036291">
    <property type="entry name" value="NAD(P)-bd_dom_sf"/>
</dbReference>
<dbReference type="NCBIfam" id="TIGR01772">
    <property type="entry name" value="MDH_euk_gproteo"/>
    <property type="match status" value="1"/>
</dbReference>
<dbReference type="PANTHER" id="PTHR11540">
    <property type="entry name" value="MALATE AND LACTATE DEHYDROGENASE"/>
    <property type="match status" value="1"/>
</dbReference>
<dbReference type="PANTHER" id="PTHR11540:SF16">
    <property type="entry name" value="MALATE DEHYDROGENASE, MITOCHONDRIAL"/>
    <property type="match status" value="1"/>
</dbReference>
<dbReference type="Pfam" id="PF02866">
    <property type="entry name" value="Ldh_1_C"/>
    <property type="match status" value="1"/>
</dbReference>
<dbReference type="Pfam" id="PF00056">
    <property type="entry name" value="Ldh_1_N"/>
    <property type="match status" value="1"/>
</dbReference>
<dbReference type="PIRSF" id="PIRSF000102">
    <property type="entry name" value="Lac_mal_DH"/>
    <property type="match status" value="1"/>
</dbReference>
<dbReference type="SUPFAM" id="SSF56327">
    <property type="entry name" value="LDH C-terminal domain-like"/>
    <property type="match status" value="1"/>
</dbReference>
<dbReference type="SUPFAM" id="SSF51735">
    <property type="entry name" value="NAD(P)-binding Rossmann-fold domains"/>
    <property type="match status" value="1"/>
</dbReference>
<dbReference type="PROSITE" id="PS00068">
    <property type="entry name" value="MDH"/>
    <property type="match status" value="1"/>
</dbReference>
<sequence>MKVAVLGAAGGIGQALALLLKTQLPSGSELSLYDIAPVTPGVAVDLSHIPTAVKIKGFSGEDATPALEGADVVLISAGVARKPGMDRSDLFNVNAGIVKNLVQQVAKTCPKACIGIITNPVNTTVAIAAEVLKKAGVYDKNKLFGVTTLDIIRSNTFVAELKGKQPGEVEVPVIGGHSGVTILPLLSQVPGVSFTEQEVADLTKRIQNAGTEVVEAKAGGGSATLSMGQAAARFGLSLVRALQGEQGVVECAYVEGDGQYARFFSQPLLLGKNGVEERKSIGTLSAFEQNALEGMLDTLKKDIALGEEFVNK</sequence>
<comment type="function">
    <text evidence="1">Catalyzes the reversible oxidation of malate to oxaloacetate.</text>
</comment>
<comment type="catalytic activity">
    <reaction evidence="1">
        <text>(S)-malate + NAD(+) = oxaloacetate + NADH + H(+)</text>
        <dbReference type="Rhea" id="RHEA:21432"/>
        <dbReference type="ChEBI" id="CHEBI:15378"/>
        <dbReference type="ChEBI" id="CHEBI:15589"/>
        <dbReference type="ChEBI" id="CHEBI:16452"/>
        <dbReference type="ChEBI" id="CHEBI:57540"/>
        <dbReference type="ChEBI" id="CHEBI:57945"/>
        <dbReference type="EC" id="1.1.1.37"/>
    </reaction>
</comment>
<comment type="subunit">
    <text evidence="1">Homodimer.</text>
</comment>
<comment type="similarity">
    <text evidence="1">Belongs to the LDH/MDH superfamily. MDH type 1 family.</text>
</comment>
<proteinExistence type="inferred from homology"/>
<evidence type="ECO:0000255" key="1">
    <source>
        <dbReference type="HAMAP-Rule" id="MF_01516"/>
    </source>
</evidence>
<gene>
    <name evidence="1" type="primary">mdh</name>
    <name type="ordered locus">EcE24377A_3719</name>
</gene>